<dbReference type="EC" id="3.6.5.-" evidence="1"/>
<dbReference type="EMBL" id="AE014075">
    <property type="protein sequence ID" value="AAN82380.1"/>
    <property type="molecule type" value="Genomic_DNA"/>
</dbReference>
<dbReference type="PIR" id="A85982">
    <property type="entry name" value="A85982"/>
</dbReference>
<dbReference type="PIR" id="F91136">
    <property type="entry name" value="F91136"/>
</dbReference>
<dbReference type="SMR" id="Q8FD82"/>
<dbReference type="STRING" id="199310.c3940"/>
<dbReference type="KEGG" id="ecc:c3940"/>
<dbReference type="eggNOG" id="COG0536">
    <property type="taxonomic scope" value="Bacteria"/>
</dbReference>
<dbReference type="HOGENOM" id="CLU_011747_2_0_6"/>
<dbReference type="BioCyc" id="ECOL199310:C3940-MONOMER"/>
<dbReference type="Proteomes" id="UP000001410">
    <property type="component" value="Chromosome"/>
</dbReference>
<dbReference type="GO" id="GO:0005737">
    <property type="term" value="C:cytoplasm"/>
    <property type="evidence" value="ECO:0007669"/>
    <property type="project" value="UniProtKB-SubCell"/>
</dbReference>
<dbReference type="GO" id="GO:0005525">
    <property type="term" value="F:GTP binding"/>
    <property type="evidence" value="ECO:0007669"/>
    <property type="project" value="UniProtKB-UniRule"/>
</dbReference>
<dbReference type="GO" id="GO:0003924">
    <property type="term" value="F:GTPase activity"/>
    <property type="evidence" value="ECO:0007669"/>
    <property type="project" value="UniProtKB-UniRule"/>
</dbReference>
<dbReference type="GO" id="GO:0000287">
    <property type="term" value="F:magnesium ion binding"/>
    <property type="evidence" value="ECO:0007669"/>
    <property type="project" value="InterPro"/>
</dbReference>
<dbReference type="GO" id="GO:0042254">
    <property type="term" value="P:ribosome biogenesis"/>
    <property type="evidence" value="ECO:0007669"/>
    <property type="project" value="UniProtKB-UniRule"/>
</dbReference>
<dbReference type="CDD" id="cd01898">
    <property type="entry name" value="Obg"/>
    <property type="match status" value="1"/>
</dbReference>
<dbReference type="FunFam" id="2.70.210.12:FF:000001">
    <property type="entry name" value="GTPase Obg"/>
    <property type="match status" value="1"/>
</dbReference>
<dbReference type="FunFam" id="3.40.50.300:FF:000185">
    <property type="entry name" value="GTPase Obg"/>
    <property type="match status" value="1"/>
</dbReference>
<dbReference type="Gene3D" id="2.70.210.12">
    <property type="entry name" value="GTP1/OBG domain"/>
    <property type="match status" value="1"/>
</dbReference>
<dbReference type="Gene3D" id="3.40.50.300">
    <property type="entry name" value="P-loop containing nucleotide triphosphate hydrolases"/>
    <property type="match status" value="1"/>
</dbReference>
<dbReference type="HAMAP" id="MF_01454">
    <property type="entry name" value="GTPase_Obg"/>
    <property type="match status" value="1"/>
</dbReference>
<dbReference type="InterPro" id="IPR031167">
    <property type="entry name" value="G_OBG"/>
</dbReference>
<dbReference type="InterPro" id="IPR006073">
    <property type="entry name" value="GTP-bd"/>
</dbReference>
<dbReference type="InterPro" id="IPR014100">
    <property type="entry name" value="GTP-bd_Obg/CgtA"/>
</dbReference>
<dbReference type="InterPro" id="IPR006074">
    <property type="entry name" value="GTP1-OBG_CS"/>
</dbReference>
<dbReference type="InterPro" id="IPR006169">
    <property type="entry name" value="GTP1_OBG_dom"/>
</dbReference>
<dbReference type="InterPro" id="IPR036726">
    <property type="entry name" value="GTP1_OBG_dom_sf"/>
</dbReference>
<dbReference type="InterPro" id="IPR045086">
    <property type="entry name" value="OBG_GTPase"/>
</dbReference>
<dbReference type="InterPro" id="IPR027417">
    <property type="entry name" value="P-loop_NTPase"/>
</dbReference>
<dbReference type="NCBIfam" id="TIGR02729">
    <property type="entry name" value="Obg_CgtA"/>
    <property type="match status" value="1"/>
</dbReference>
<dbReference type="NCBIfam" id="NF008955">
    <property type="entry name" value="PRK12297.1"/>
    <property type="match status" value="1"/>
</dbReference>
<dbReference type="NCBIfam" id="NF008956">
    <property type="entry name" value="PRK12299.1"/>
    <property type="match status" value="1"/>
</dbReference>
<dbReference type="PANTHER" id="PTHR11702">
    <property type="entry name" value="DEVELOPMENTALLY REGULATED GTP-BINDING PROTEIN-RELATED"/>
    <property type="match status" value="1"/>
</dbReference>
<dbReference type="PANTHER" id="PTHR11702:SF31">
    <property type="entry name" value="MITOCHONDRIAL RIBOSOME-ASSOCIATED GTPASE 2"/>
    <property type="match status" value="1"/>
</dbReference>
<dbReference type="Pfam" id="PF01018">
    <property type="entry name" value="GTP1_OBG"/>
    <property type="match status" value="1"/>
</dbReference>
<dbReference type="Pfam" id="PF01926">
    <property type="entry name" value="MMR_HSR1"/>
    <property type="match status" value="1"/>
</dbReference>
<dbReference type="PIRSF" id="PIRSF002401">
    <property type="entry name" value="GTP_bd_Obg/CgtA"/>
    <property type="match status" value="1"/>
</dbReference>
<dbReference type="PRINTS" id="PR00326">
    <property type="entry name" value="GTP1OBG"/>
</dbReference>
<dbReference type="SUPFAM" id="SSF82051">
    <property type="entry name" value="Obg GTP-binding protein N-terminal domain"/>
    <property type="match status" value="1"/>
</dbReference>
<dbReference type="SUPFAM" id="SSF52540">
    <property type="entry name" value="P-loop containing nucleoside triphosphate hydrolases"/>
    <property type="match status" value="1"/>
</dbReference>
<dbReference type="PROSITE" id="PS51710">
    <property type="entry name" value="G_OBG"/>
    <property type="match status" value="1"/>
</dbReference>
<dbReference type="PROSITE" id="PS00905">
    <property type="entry name" value="GTP1_OBG"/>
    <property type="match status" value="1"/>
</dbReference>
<dbReference type="PROSITE" id="PS51883">
    <property type="entry name" value="OBG"/>
    <property type="match status" value="1"/>
</dbReference>
<gene>
    <name evidence="1" type="primary">obg</name>
    <name type="ordered locus">c3940</name>
</gene>
<organism>
    <name type="scientific">Escherichia coli O6:H1 (strain CFT073 / ATCC 700928 / UPEC)</name>
    <dbReference type="NCBI Taxonomy" id="199310"/>
    <lineage>
        <taxon>Bacteria</taxon>
        <taxon>Pseudomonadati</taxon>
        <taxon>Pseudomonadota</taxon>
        <taxon>Gammaproteobacteria</taxon>
        <taxon>Enterobacterales</taxon>
        <taxon>Enterobacteriaceae</taxon>
        <taxon>Escherichia</taxon>
    </lineage>
</organism>
<feature type="chain" id="PRO_0000385923" description="GTPase Obg">
    <location>
        <begin position="1"/>
        <end position="390"/>
    </location>
</feature>
<feature type="domain" description="Obg" evidence="2">
    <location>
        <begin position="1"/>
        <end position="159"/>
    </location>
</feature>
<feature type="domain" description="OBG-type G" evidence="1">
    <location>
        <begin position="160"/>
        <end position="333"/>
    </location>
</feature>
<feature type="region of interest" description="Disordered" evidence="3">
    <location>
        <begin position="127"/>
        <end position="147"/>
    </location>
</feature>
<feature type="compositionally biased region" description="Polar residues" evidence="3">
    <location>
        <begin position="129"/>
        <end position="145"/>
    </location>
</feature>
<feature type="binding site" evidence="1">
    <location>
        <begin position="166"/>
        <end position="173"/>
    </location>
    <ligand>
        <name>GTP</name>
        <dbReference type="ChEBI" id="CHEBI:37565"/>
    </ligand>
</feature>
<feature type="binding site" evidence="1">
    <location>
        <position position="173"/>
    </location>
    <ligand>
        <name>Mg(2+)</name>
        <dbReference type="ChEBI" id="CHEBI:18420"/>
    </ligand>
</feature>
<feature type="binding site" evidence="1">
    <location>
        <begin position="191"/>
        <end position="195"/>
    </location>
    <ligand>
        <name>GTP</name>
        <dbReference type="ChEBI" id="CHEBI:37565"/>
    </ligand>
</feature>
<feature type="binding site" evidence="1">
    <location>
        <position position="193"/>
    </location>
    <ligand>
        <name>Mg(2+)</name>
        <dbReference type="ChEBI" id="CHEBI:18420"/>
    </ligand>
</feature>
<feature type="binding site" evidence="1">
    <location>
        <begin position="213"/>
        <end position="216"/>
    </location>
    <ligand>
        <name>GTP</name>
        <dbReference type="ChEBI" id="CHEBI:37565"/>
    </ligand>
</feature>
<feature type="binding site" evidence="1">
    <location>
        <begin position="283"/>
        <end position="286"/>
    </location>
    <ligand>
        <name>GTP</name>
        <dbReference type="ChEBI" id="CHEBI:37565"/>
    </ligand>
</feature>
<feature type="binding site" evidence="1">
    <location>
        <begin position="314"/>
        <end position="316"/>
    </location>
    <ligand>
        <name>GTP</name>
        <dbReference type="ChEBI" id="CHEBI:37565"/>
    </ligand>
</feature>
<reference key="1">
    <citation type="journal article" date="2002" name="Proc. Natl. Acad. Sci. U.S.A.">
        <title>Extensive mosaic structure revealed by the complete genome sequence of uropathogenic Escherichia coli.</title>
        <authorList>
            <person name="Welch R.A."/>
            <person name="Burland V."/>
            <person name="Plunkett G. III"/>
            <person name="Redford P."/>
            <person name="Roesch P."/>
            <person name="Rasko D."/>
            <person name="Buckles E.L."/>
            <person name="Liou S.-R."/>
            <person name="Boutin A."/>
            <person name="Hackett J."/>
            <person name="Stroud D."/>
            <person name="Mayhew G.F."/>
            <person name="Rose D.J."/>
            <person name="Zhou S."/>
            <person name="Schwartz D.C."/>
            <person name="Perna N.T."/>
            <person name="Mobley H.L.T."/>
            <person name="Donnenberg M.S."/>
            <person name="Blattner F.R."/>
        </authorList>
    </citation>
    <scope>NUCLEOTIDE SEQUENCE [LARGE SCALE GENOMIC DNA]</scope>
    <source>
        <strain>CFT073 / ATCC 700928 / UPEC</strain>
    </source>
</reference>
<evidence type="ECO:0000255" key="1">
    <source>
        <dbReference type="HAMAP-Rule" id="MF_01454"/>
    </source>
</evidence>
<evidence type="ECO:0000255" key="2">
    <source>
        <dbReference type="PROSITE-ProRule" id="PRU01231"/>
    </source>
</evidence>
<evidence type="ECO:0000256" key="3">
    <source>
        <dbReference type="SAM" id="MobiDB-lite"/>
    </source>
</evidence>
<sequence length="390" mass="43256">MKFVDEASILVVAGDGGNGCVSFRREKYIPKGGPDGGDGGDGGDVWMEADENLNTLIDYRFEKSFRAERGQNGASRDCTGKRGKDVTIKVPVGTRVIDQGTGETMGDMTKHGQRLLVAKGGWHGLGNTRFKSSVNRTPRQKTNGTPGDKRELLLELMLLADVGMLGMPNAGKSTFIRAVSAAKPKVADYPFTTLVPSLGVVRMDNEKSFVVADIPGLIEGAAEGAGLGIRFLKHLERCRVLLHLIDIDPIDGTDPVENARIIISELEKYSQDLAAKPRWLVFNKIDLLDKVEAEEKAKAIAEALGWEDKYYLISAASGLGVKDLCWDVMTFIIENPVVQAEEAKQPEKVEFMWDDYHRQQLEEIAEEDDEDWDDDWDEDDEEGVEFIYKR</sequence>
<accession>Q8FD82</accession>
<keyword id="KW-0963">Cytoplasm</keyword>
<keyword id="KW-0342">GTP-binding</keyword>
<keyword id="KW-0378">Hydrolase</keyword>
<keyword id="KW-0460">Magnesium</keyword>
<keyword id="KW-0479">Metal-binding</keyword>
<keyword id="KW-0547">Nucleotide-binding</keyword>
<keyword id="KW-1185">Reference proteome</keyword>
<comment type="function">
    <text evidence="1">An essential GTPase which binds GTP, GDP and possibly (p)ppGpp with moderate affinity, with high nucleotide exchange rates and a fairly low GTP hydrolysis rate. Plays a role in control of the cell cycle, stress response, ribosome biogenesis and in those bacteria that undergo differentiation, in morphogenesis control.</text>
</comment>
<comment type="cofactor">
    <cofactor evidence="1">
        <name>Mg(2+)</name>
        <dbReference type="ChEBI" id="CHEBI:18420"/>
    </cofactor>
</comment>
<comment type="subunit">
    <text evidence="1">Monomer.</text>
</comment>
<comment type="subcellular location">
    <subcellularLocation>
        <location evidence="1">Cytoplasm</location>
    </subcellularLocation>
</comment>
<comment type="similarity">
    <text evidence="1">Belongs to the TRAFAC class OBG-HflX-like GTPase superfamily. OBG GTPase family.</text>
</comment>
<proteinExistence type="inferred from homology"/>
<name>OBG_ECOL6</name>
<protein>
    <recommendedName>
        <fullName evidence="1">GTPase Obg</fullName>
        <ecNumber evidence="1">3.6.5.-</ecNumber>
    </recommendedName>
    <alternativeName>
        <fullName evidence="1">GTP-binding protein Obg</fullName>
    </alternativeName>
</protein>